<proteinExistence type="evidence at protein level"/>
<sequence length="27" mass="2613">AVDKGGGKAEKKDGNRKKKLAGGEGGG</sequence>
<organism>
    <name type="scientific">Actinia equina</name>
    <name type="common">Beadlet anemone</name>
    <dbReference type="NCBI Taxonomy" id="6106"/>
    <lineage>
        <taxon>Eukaryota</taxon>
        <taxon>Metazoa</taxon>
        <taxon>Cnidaria</taxon>
        <taxon>Anthozoa</taxon>
        <taxon>Hexacorallia</taxon>
        <taxon>Actiniaria</taxon>
        <taxon>Actiniidae</taxon>
        <taxon>Actinia</taxon>
    </lineage>
</organism>
<keyword id="KW-0903">Direct protein sequencing</keyword>
<keyword id="KW-0964">Secreted</keyword>
<name>EQA_ACTEQ</name>
<protein>
    <recommendedName>
        <fullName evidence="3">Equinin A</fullName>
    </recommendedName>
</protein>
<feature type="peptide" id="PRO_0000461985" description="Equinin A" evidence="2">
    <location>
        <begin position="1"/>
        <end position="27"/>
    </location>
</feature>
<feature type="region of interest" description="Disordered" evidence="1">
    <location>
        <begin position="1"/>
        <end position="27"/>
    </location>
</feature>
<feature type="compositionally biased region" description="Basic and acidic residues" evidence="1">
    <location>
        <begin position="1"/>
        <end position="13"/>
    </location>
</feature>
<evidence type="ECO:0000256" key="1">
    <source>
        <dbReference type="SAM" id="MobiDB-lite"/>
    </source>
</evidence>
<evidence type="ECO:0000269" key="2">
    <source>
    </source>
</evidence>
<evidence type="ECO:0000303" key="3">
    <source>
    </source>
</evidence>
<comment type="function">
    <text evidence="2">Peptide with unknown function. Does not show antimicrobial and hemolytic activities.</text>
</comment>
<comment type="subcellular location">
    <subcellularLocation>
        <location evidence="2">Secreted</location>
    </subcellularLocation>
</comment>
<reference key="1">
    <citation type="journal article" date="2024" name="Mar. Drugs">
        <title>Equinins as novel broad-spectrum antimicrobial peptides isolated from the cnidarian Actinia equina (Linnaeus, 1758).</title>
        <authorList>
            <person name="La Corte C."/>
            <person name="Catania V."/>
            <person name="Dara M."/>
            <person name="Parrinello D."/>
            <person name="Staropoli M."/>
            <person name="Trapani M.R."/>
            <person name="Cammarata M."/>
            <person name="Parisi M.G."/>
        </authorList>
    </citation>
    <scope>PROTEIN SEQUENCE</scope>
    <scope>SUBCELLULAR LOCATION</scope>
    <scope>SYNTHESIS</scope>
    <source>
        <tissue>Tentacle</tissue>
    </source>
</reference>
<accession>P0DY20</accession>